<proteinExistence type="inferred from homology"/>
<accession>Q5BBK9</accession>
<accession>C8VLP8</accession>
<organism>
    <name type="scientific">Emericella nidulans (strain FGSC A4 / ATCC 38163 / CBS 112.46 / NRRL 194 / M139)</name>
    <name type="common">Aspergillus nidulans</name>
    <dbReference type="NCBI Taxonomy" id="227321"/>
    <lineage>
        <taxon>Eukaryota</taxon>
        <taxon>Fungi</taxon>
        <taxon>Dikarya</taxon>
        <taxon>Ascomycota</taxon>
        <taxon>Pezizomycotina</taxon>
        <taxon>Eurotiomycetes</taxon>
        <taxon>Eurotiomycetidae</taxon>
        <taxon>Eurotiales</taxon>
        <taxon>Aspergillaceae</taxon>
        <taxon>Aspergillus</taxon>
        <taxon>Aspergillus subgen. Nidulantes</taxon>
    </lineage>
</organism>
<dbReference type="EMBL" id="AACD01000032">
    <property type="protein sequence ID" value="EAA64903.1"/>
    <property type="molecule type" value="Genomic_DNA"/>
</dbReference>
<dbReference type="EMBL" id="BN001307">
    <property type="protein sequence ID" value="CBF86120.1"/>
    <property type="molecule type" value="Genomic_DNA"/>
</dbReference>
<dbReference type="RefSeq" id="XP_659675.1">
    <property type="nucleotide sequence ID" value="XM_654583.1"/>
</dbReference>
<dbReference type="SMR" id="Q5BBK9"/>
<dbReference type="FunCoup" id="Q5BBK9">
    <property type="interactions" value="102"/>
</dbReference>
<dbReference type="STRING" id="227321.Q5BBK9"/>
<dbReference type="EnsemblFungi" id="CBF86120">
    <property type="protein sequence ID" value="CBF86120"/>
    <property type="gene ID" value="ANIA_02071"/>
</dbReference>
<dbReference type="KEGG" id="ani:ANIA_02071"/>
<dbReference type="VEuPathDB" id="FungiDB:AN2071"/>
<dbReference type="eggNOG" id="KOG1818">
    <property type="taxonomic scope" value="Eukaryota"/>
</dbReference>
<dbReference type="HOGENOM" id="CLU_011862_1_0_1"/>
<dbReference type="InParanoid" id="Q5BBK9"/>
<dbReference type="OMA" id="HTWGGNT"/>
<dbReference type="OrthoDB" id="957735at2759"/>
<dbReference type="Proteomes" id="UP000000560">
    <property type="component" value="Chromosome VII"/>
</dbReference>
<dbReference type="GO" id="GO:0010008">
    <property type="term" value="C:endosome membrane"/>
    <property type="evidence" value="ECO:0007669"/>
    <property type="project" value="UniProtKB-SubCell"/>
</dbReference>
<dbReference type="GO" id="GO:0033565">
    <property type="term" value="C:ESCRT-0 complex"/>
    <property type="evidence" value="ECO:0000318"/>
    <property type="project" value="GO_Central"/>
</dbReference>
<dbReference type="GO" id="GO:0032266">
    <property type="term" value="F:phosphatidylinositol-3-phosphate binding"/>
    <property type="evidence" value="ECO:0000318"/>
    <property type="project" value="GO_Central"/>
</dbReference>
<dbReference type="GO" id="GO:0043130">
    <property type="term" value="F:ubiquitin binding"/>
    <property type="evidence" value="ECO:0000318"/>
    <property type="project" value="GO_Central"/>
</dbReference>
<dbReference type="GO" id="GO:0008270">
    <property type="term" value="F:zinc ion binding"/>
    <property type="evidence" value="ECO:0007669"/>
    <property type="project" value="UniProtKB-KW"/>
</dbReference>
<dbReference type="GO" id="GO:0006623">
    <property type="term" value="P:protein targeting to vacuole"/>
    <property type="evidence" value="ECO:0000318"/>
    <property type="project" value="GO_Central"/>
</dbReference>
<dbReference type="GO" id="GO:0043328">
    <property type="term" value="P:protein transport to vacuole involved in ubiquitin-dependent protein catabolic process via the multivesicular body sorting pathway"/>
    <property type="evidence" value="ECO:0000318"/>
    <property type="project" value="GO_Central"/>
</dbReference>
<dbReference type="CDD" id="cd15735">
    <property type="entry name" value="FYVE_spVPS27p_like"/>
    <property type="match status" value="1"/>
</dbReference>
<dbReference type="CDD" id="cd21385">
    <property type="entry name" value="GAT_Vps27"/>
    <property type="match status" value="1"/>
</dbReference>
<dbReference type="CDD" id="cd16979">
    <property type="entry name" value="VHS_Vps27"/>
    <property type="match status" value="1"/>
</dbReference>
<dbReference type="FunFam" id="1.20.5.1940:FF:000001">
    <property type="entry name" value="Vacuolar protein sorting-associated protein 27"/>
    <property type="match status" value="1"/>
</dbReference>
<dbReference type="FunFam" id="1.25.40.90:FF:000031">
    <property type="entry name" value="Vacuolar protein sorting-associated protein 27"/>
    <property type="match status" value="1"/>
</dbReference>
<dbReference type="FunFam" id="3.30.40.10:FF:000161">
    <property type="entry name" value="Vacuolar protein sorting-associated protein 27"/>
    <property type="match status" value="1"/>
</dbReference>
<dbReference type="Gene3D" id="1.20.5.1940">
    <property type="match status" value="1"/>
</dbReference>
<dbReference type="Gene3D" id="1.25.40.90">
    <property type="match status" value="1"/>
</dbReference>
<dbReference type="Gene3D" id="6.10.140.100">
    <property type="match status" value="1"/>
</dbReference>
<dbReference type="Gene3D" id="3.30.40.10">
    <property type="entry name" value="Zinc/RING finger domain, C3HC4 (zinc finger)"/>
    <property type="match status" value="1"/>
</dbReference>
<dbReference type="InterPro" id="IPR008942">
    <property type="entry name" value="ENTH_VHS"/>
</dbReference>
<dbReference type="InterPro" id="IPR017073">
    <property type="entry name" value="HGS/VPS27"/>
</dbReference>
<dbReference type="InterPro" id="IPR003903">
    <property type="entry name" value="UIM_dom"/>
</dbReference>
<dbReference type="InterPro" id="IPR002014">
    <property type="entry name" value="VHS_dom"/>
</dbReference>
<dbReference type="InterPro" id="IPR049425">
    <property type="entry name" value="Vps27_GAT-like"/>
</dbReference>
<dbReference type="InterPro" id="IPR000306">
    <property type="entry name" value="Znf_FYVE"/>
</dbReference>
<dbReference type="InterPro" id="IPR017455">
    <property type="entry name" value="Znf_FYVE-rel"/>
</dbReference>
<dbReference type="InterPro" id="IPR011011">
    <property type="entry name" value="Znf_FYVE_PHD"/>
</dbReference>
<dbReference type="InterPro" id="IPR013083">
    <property type="entry name" value="Znf_RING/FYVE/PHD"/>
</dbReference>
<dbReference type="PANTHER" id="PTHR47794">
    <property type="entry name" value="VACUOLAR PROTEIN SORTING-ASSOCIATED PROTEIN 27"/>
    <property type="match status" value="1"/>
</dbReference>
<dbReference type="PANTHER" id="PTHR47794:SF1">
    <property type="entry name" value="VACUOLAR PROTEIN SORTING-ASSOCIATED PROTEIN 27"/>
    <property type="match status" value="1"/>
</dbReference>
<dbReference type="Pfam" id="PF01363">
    <property type="entry name" value="FYVE"/>
    <property type="match status" value="1"/>
</dbReference>
<dbReference type="Pfam" id="PF02809">
    <property type="entry name" value="UIM"/>
    <property type="match status" value="3"/>
</dbReference>
<dbReference type="Pfam" id="PF00790">
    <property type="entry name" value="VHS"/>
    <property type="match status" value="1"/>
</dbReference>
<dbReference type="Pfam" id="PF21356">
    <property type="entry name" value="Vps27_GAT-like"/>
    <property type="match status" value="1"/>
</dbReference>
<dbReference type="PIRSF" id="PIRSF036956">
    <property type="entry name" value="Hrs_Vps27"/>
    <property type="match status" value="1"/>
</dbReference>
<dbReference type="SMART" id="SM00064">
    <property type="entry name" value="FYVE"/>
    <property type="match status" value="1"/>
</dbReference>
<dbReference type="SMART" id="SM00726">
    <property type="entry name" value="UIM"/>
    <property type="match status" value="2"/>
</dbReference>
<dbReference type="SMART" id="SM00288">
    <property type="entry name" value="VHS"/>
    <property type="match status" value="1"/>
</dbReference>
<dbReference type="SUPFAM" id="SSF48464">
    <property type="entry name" value="ENTH/VHS domain"/>
    <property type="match status" value="1"/>
</dbReference>
<dbReference type="SUPFAM" id="SSF57903">
    <property type="entry name" value="FYVE/PHD zinc finger"/>
    <property type="match status" value="1"/>
</dbReference>
<dbReference type="PROSITE" id="PS50330">
    <property type="entry name" value="UIM"/>
    <property type="match status" value="2"/>
</dbReference>
<dbReference type="PROSITE" id="PS50179">
    <property type="entry name" value="VHS"/>
    <property type="match status" value="1"/>
</dbReference>
<dbReference type="PROSITE" id="PS50178">
    <property type="entry name" value="ZF_FYVE"/>
    <property type="match status" value="1"/>
</dbReference>
<protein>
    <recommendedName>
        <fullName>Vacuolar protein sorting-associated protein 27</fullName>
    </recommendedName>
</protein>
<name>VPS27_EMENI</name>
<sequence>MAGWFSSASPLDEQIERATASSLEDIALNLEISDLIRSKGVQPKDAMRSLKRRLENKNPNIQIATLKLTDTCVKNGGTHFLAEIASREFMDNLVSLLKAEGVPLNSSVRDLMLALIQDWAMAAQGRMDLSYLGETYRKLQMEGFQFPPKSAISGSMLESSAPPEWIDSDVCMRCRTPFSFMNRKHHCRNCGNVFDAQCSSKTLPLPHLGILQPVRVDDGCYAKLTSKPFNQGSLADRSTFKNNSITKSNVLEPRAARVESGFDEDLRRALQMSLEEAQNKSSSGYVPQPKPAQAPANTQPQPSTDEEEDADLKAAIEASLRDMEEHKQKYAAALKNNTSAESSRETPAAASLPKNPYELSPVEVENIHLFSTLVDRLQHQPPGTILREPQIQELYESIGALRPKLARSYGETMSKHDTLLDLHAKLSTVVRYYDRMLEERLSSAYSQHNLGYGPVPGGAQYPNIYPSMPSTTAEVRPGAENFYYGNSGVEPPAPARTPYSQPPLERENGVVSSSMHPPLQQPSSGPYWNPNNHSIASPQPNVNAFNSNNTPYPGPGAPSQFYTSSAYQEPEKLFQQPRQGEPESPYQPSPVTNRDSYYQSAGLPSNPVEQQPPVDHGQSPGHAQPADSRSSQSGQPKATEPSAQSYYLPQEQQQQQQQQQQQSAQGTGYQGYPQGNTNYQAPYGGDVSPISAPPPVQYQQPAAPRPVVEESLIEL</sequence>
<comment type="function">
    <text evidence="1">Component of the ESCRT-0 complex which is the sorting receptor for ubiquitinated cargo proteins at the multivesicular body (MVB) and recruits ESCRT-I to the MVB outer membrane.</text>
</comment>
<comment type="subunit">
    <text>Component of the ESCRT-0 complex composed of HSE1 and VPS27.</text>
</comment>
<comment type="subcellular location">
    <subcellularLocation>
        <location evidence="1">Endosome membrane</location>
        <topology evidence="1">Peripheral membrane protein</topology>
        <orientation evidence="1">Cytoplasmic side</orientation>
    </subcellularLocation>
</comment>
<comment type="domain">
    <text>The FYVE domain is involved in the binding to phosphatidylinositol 3-phosphate (PtdIns(3)P) which is required for the association to endosomal membranes.</text>
</comment>
<comment type="domain">
    <text evidence="1">Both IUM domains are necessary for efficient binding to ubiquitin.</text>
</comment>
<comment type="similarity">
    <text evidence="6">Belongs to the VPS27 family.</text>
</comment>
<evidence type="ECO:0000250" key="1"/>
<evidence type="ECO:0000255" key="2">
    <source>
        <dbReference type="PROSITE-ProRule" id="PRU00091"/>
    </source>
</evidence>
<evidence type="ECO:0000255" key="3">
    <source>
        <dbReference type="PROSITE-ProRule" id="PRU00213"/>
    </source>
</evidence>
<evidence type="ECO:0000255" key="4">
    <source>
        <dbReference type="PROSITE-ProRule" id="PRU00218"/>
    </source>
</evidence>
<evidence type="ECO:0000256" key="5">
    <source>
        <dbReference type="SAM" id="MobiDB-lite"/>
    </source>
</evidence>
<evidence type="ECO:0000305" key="6"/>
<feature type="chain" id="PRO_0000292516" description="Vacuolar protein sorting-associated protein 27">
    <location>
        <begin position="1"/>
        <end position="715"/>
    </location>
</feature>
<feature type="domain" description="VHS" evidence="4">
    <location>
        <begin position="16"/>
        <end position="147"/>
    </location>
</feature>
<feature type="domain" description="UIM 1" evidence="3">
    <location>
        <begin position="261"/>
        <end position="280"/>
    </location>
</feature>
<feature type="domain" description="UIM 2" evidence="3">
    <location>
        <begin position="307"/>
        <end position="326"/>
    </location>
</feature>
<feature type="zinc finger region" description="FYVE-type; degenerate" evidence="2">
    <location>
        <begin position="165"/>
        <end position="225"/>
    </location>
</feature>
<feature type="region of interest" description="Disordered" evidence="5">
    <location>
        <begin position="275"/>
        <end position="310"/>
    </location>
</feature>
<feature type="region of interest" description="Disordered" evidence="5">
    <location>
        <begin position="335"/>
        <end position="355"/>
    </location>
</feature>
<feature type="region of interest" description="Disordered" evidence="5">
    <location>
        <begin position="481"/>
        <end position="715"/>
    </location>
</feature>
<feature type="compositionally biased region" description="Low complexity" evidence="5">
    <location>
        <begin position="291"/>
        <end position="302"/>
    </location>
</feature>
<feature type="compositionally biased region" description="Polar residues" evidence="5">
    <location>
        <begin position="510"/>
        <end position="551"/>
    </location>
</feature>
<feature type="compositionally biased region" description="Polar residues" evidence="5">
    <location>
        <begin position="589"/>
        <end position="609"/>
    </location>
</feature>
<feature type="compositionally biased region" description="Polar residues" evidence="5">
    <location>
        <begin position="627"/>
        <end position="647"/>
    </location>
</feature>
<feature type="compositionally biased region" description="Low complexity" evidence="5">
    <location>
        <begin position="650"/>
        <end position="662"/>
    </location>
</feature>
<feature type="compositionally biased region" description="Polar residues" evidence="5">
    <location>
        <begin position="663"/>
        <end position="680"/>
    </location>
</feature>
<feature type="compositionally biased region" description="Low complexity" evidence="5">
    <location>
        <begin position="697"/>
        <end position="706"/>
    </location>
</feature>
<keyword id="KW-0967">Endosome</keyword>
<keyword id="KW-0472">Membrane</keyword>
<keyword id="KW-0479">Metal-binding</keyword>
<keyword id="KW-1185">Reference proteome</keyword>
<keyword id="KW-0677">Repeat</keyword>
<keyword id="KW-0862">Zinc</keyword>
<keyword id="KW-0863">Zinc-finger</keyword>
<gene>
    <name type="primary">vps27</name>
    <name type="ORF">AN2071</name>
</gene>
<reference key="1">
    <citation type="journal article" date="2005" name="Nature">
        <title>Sequencing of Aspergillus nidulans and comparative analysis with A. fumigatus and A. oryzae.</title>
        <authorList>
            <person name="Galagan J.E."/>
            <person name="Calvo S.E."/>
            <person name="Cuomo C."/>
            <person name="Ma L.-J."/>
            <person name="Wortman J.R."/>
            <person name="Batzoglou S."/>
            <person name="Lee S.-I."/>
            <person name="Bastuerkmen M."/>
            <person name="Spevak C.C."/>
            <person name="Clutterbuck J."/>
            <person name="Kapitonov V."/>
            <person name="Jurka J."/>
            <person name="Scazzocchio C."/>
            <person name="Farman M.L."/>
            <person name="Butler J."/>
            <person name="Purcell S."/>
            <person name="Harris S."/>
            <person name="Braus G.H."/>
            <person name="Draht O."/>
            <person name="Busch S."/>
            <person name="D'Enfert C."/>
            <person name="Bouchier C."/>
            <person name="Goldman G.H."/>
            <person name="Bell-Pedersen D."/>
            <person name="Griffiths-Jones S."/>
            <person name="Doonan J.H."/>
            <person name="Yu J."/>
            <person name="Vienken K."/>
            <person name="Pain A."/>
            <person name="Freitag M."/>
            <person name="Selker E.U."/>
            <person name="Archer D.B."/>
            <person name="Penalva M.A."/>
            <person name="Oakley B.R."/>
            <person name="Momany M."/>
            <person name="Tanaka T."/>
            <person name="Kumagai T."/>
            <person name="Asai K."/>
            <person name="Machida M."/>
            <person name="Nierman W.C."/>
            <person name="Denning D.W."/>
            <person name="Caddick M.X."/>
            <person name="Hynes M."/>
            <person name="Paoletti M."/>
            <person name="Fischer R."/>
            <person name="Miller B.L."/>
            <person name="Dyer P.S."/>
            <person name="Sachs M.S."/>
            <person name="Osmani S.A."/>
            <person name="Birren B.W."/>
        </authorList>
    </citation>
    <scope>NUCLEOTIDE SEQUENCE [LARGE SCALE GENOMIC DNA]</scope>
    <source>
        <strain>FGSC A4 / ATCC 38163 / CBS 112.46 / NRRL 194 / M139</strain>
    </source>
</reference>
<reference key="2">
    <citation type="journal article" date="2009" name="Fungal Genet. Biol.">
        <title>The 2008 update of the Aspergillus nidulans genome annotation: a community effort.</title>
        <authorList>
            <person name="Wortman J.R."/>
            <person name="Gilsenan J.M."/>
            <person name="Joardar V."/>
            <person name="Deegan J."/>
            <person name="Clutterbuck J."/>
            <person name="Andersen M.R."/>
            <person name="Archer D."/>
            <person name="Bencina M."/>
            <person name="Braus G."/>
            <person name="Coutinho P."/>
            <person name="von Dohren H."/>
            <person name="Doonan J."/>
            <person name="Driessen A.J."/>
            <person name="Durek P."/>
            <person name="Espeso E."/>
            <person name="Fekete E."/>
            <person name="Flipphi M."/>
            <person name="Estrada C.G."/>
            <person name="Geysens S."/>
            <person name="Goldman G."/>
            <person name="de Groot P.W."/>
            <person name="Hansen K."/>
            <person name="Harris S.D."/>
            <person name="Heinekamp T."/>
            <person name="Helmstaedt K."/>
            <person name="Henrissat B."/>
            <person name="Hofmann G."/>
            <person name="Homan T."/>
            <person name="Horio T."/>
            <person name="Horiuchi H."/>
            <person name="James S."/>
            <person name="Jones M."/>
            <person name="Karaffa L."/>
            <person name="Karanyi Z."/>
            <person name="Kato M."/>
            <person name="Keller N."/>
            <person name="Kelly D.E."/>
            <person name="Kiel J.A."/>
            <person name="Kim J.M."/>
            <person name="van der Klei I.J."/>
            <person name="Klis F.M."/>
            <person name="Kovalchuk A."/>
            <person name="Krasevec N."/>
            <person name="Kubicek C.P."/>
            <person name="Liu B."/>
            <person name="Maccabe A."/>
            <person name="Meyer V."/>
            <person name="Mirabito P."/>
            <person name="Miskei M."/>
            <person name="Mos M."/>
            <person name="Mullins J."/>
            <person name="Nelson D.R."/>
            <person name="Nielsen J."/>
            <person name="Oakley B.R."/>
            <person name="Osmani S.A."/>
            <person name="Pakula T."/>
            <person name="Paszewski A."/>
            <person name="Paulsen I."/>
            <person name="Pilsyk S."/>
            <person name="Pocsi I."/>
            <person name="Punt P.J."/>
            <person name="Ram A.F."/>
            <person name="Ren Q."/>
            <person name="Robellet X."/>
            <person name="Robson G."/>
            <person name="Seiboth B."/>
            <person name="van Solingen P."/>
            <person name="Specht T."/>
            <person name="Sun J."/>
            <person name="Taheri-Talesh N."/>
            <person name="Takeshita N."/>
            <person name="Ussery D."/>
            <person name="vanKuyk P.A."/>
            <person name="Visser H."/>
            <person name="van de Vondervoort P.J."/>
            <person name="de Vries R.P."/>
            <person name="Walton J."/>
            <person name="Xiang X."/>
            <person name="Xiong Y."/>
            <person name="Zeng A.P."/>
            <person name="Brandt B.W."/>
            <person name="Cornell M.J."/>
            <person name="van den Hondel C.A."/>
            <person name="Visser J."/>
            <person name="Oliver S.G."/>
            <person name="Turner G."/>
        </authorList>
    </citation>
    <scope>GENOME REANNOTATION</scope>
    <source>
        <strain>FGSC A4 / ATCC 38163 / CBS 112.46 / NRRL 194 / M139</strain>
    </source>
</reference>